<evidence type="ECO:0000250" key="1"/>
<evidence type="ECO:0000255" key="2"/>
<evidence type="ECO:0000255" key="3">
    <source>
        <dbReference type="PROSITE-ProRule" id="PRU10037"/>
    </source>
</evidence>
<evidence type="ECO:0000256" key="4">
    <source>
        <dbReference type="SAM" id="MobiDB-lite"/>
    </source>
</evidence>
<evidence type="ECO:0000305" key="5"/>
<reference key="1">
    <citation type="journal article" date="2002" name="Lancet">
        <title>Genome and virulence determinants of high virulence community-acquired MRSA.</title>
        <authorList>
            <person name="Baba T."/>
            <person name="Takeuchi F."/>
            <person name="Kuroda M."/>
            <person name="Yuzawa H."/>
            <person name="Aoki K."/>
            <person name="Oguchi A."/>
            <person name="Nagai Y."/>
            <person name="Iwama N."/>
            <person name="Asano K."/>
            <person name="Naimi T."/>
            <person name="Kuroda H."/>
            <person name="Cui L."/>
            <person name="Yamamoto K."/>
            <person name="Hiramatsu K."/>
        </authorList>
    </citation>
    <scope>NUCLEOTIDE SEQUENCE [LARGE SCALE GENOMIC DNA]</scope>
    <source>
        <strain>MW2</strain>
    </source>
</reference>
<proteinExistence type="inferred from homology"/>
<keyword id="KW-0106">Calcium</keyword>
<keyword id="KW-0378">Hydrolase</keyword>
<keyword id="KW-0442">Lipid degradation</keyword>
<keyword id="KW-0443">Lipid metabolism</keyword>
<keyword id="KW-0479">Metal-binding</keyword>
<keyword id="KW-0964">Secreted</keyword>
<keyword id="KW-0732">Signal</keyword>
<keyword id="KW-0865">Zymogen</keyword>
<feature type="signal peptide" evidence="2">
    <location>
        <begin position="1"/>
        <end position="34"/>
    </location>
</feature>
<feature type="propeptide" id="PRO_0000045184" evidence="1">
    <location>
        <begin position="35"/>
        <end position="290"/>
    </location>
</feature>
<feature type="chain" id="PRO_0000045185" description="Lipase 1">
    <location>
        <begin position="291"/>
        <end position="680"/>
    </location>
</feature>
<feature type="region of interest" description="Disordered" evidence="4">
    <location>
        <begin position="82"/>
        <end position="259"/>
    </location>
</feature>
<feature type="compositionally biased region" description="Basic and acidic residues" evidence="4">
    <location>
        <begin position="84"/>
        <end position="112"/>
    </location>
</feature>
<feature type="compositionally biased region" description="Polar residues" evidence="4">
    <location>
        <begin position="125"/>
        <end position="138"/>
    </location>
</feature>
<feature type="compositionally biased region" description="Low complexity" evidence="4">
    <location>
        <begin position="148"/>
        <end position="170"/>
    </location>
</feature>
<feature type="compositionally biased region" description="Polar residues" evidence="4">
    <location>
        <begin position="204"/>
        <end position="223"/>
    </location>
</feature>
<feature type="compositionally biased region" description="Basic and acidic residues" evidence="4">
    <location>
        <begin position="224"/>
        <end position="234"/>
    </location>
</feature>
<feature type="compositionally biased region" description="Polar residues" evidence="4">
    <location>
        <begin position="235"/>
        <end position="246"/>
    </location>
</feature>
<feature type="active site" description="Nucleophile" evidence="1">
    <location>
        <position position="408"/>
    </location>
</feature>
<feature type="active site" description="Charge relay system" evidence="3">
    <location>
        <position position="600"/>
    </location>
</feature>
<feature type="active site" description="Charge relay system" evidence="3">
    <location>
        <position position="639"/>
    </location>
</feature>
<feature type="binding site" evidence="1">
    <location>
        <position position="638"/>
    </location>
    <ligand>
        <name>Ca(2+)</name>
        <dbReference type="ChEBI" id="CHEBI:29108"/>
    </ligand>
</feature>
<feature type="binding site" evidence="1">
    <location>
        <position position="641"/>
    </location>
    <ligand>
        <name>Ca(2+)</name>
        <dbReference type="ChEBI" id="CHEBI:29108"/>
    </ligand>
</feature>
<feature type="binding site" evidence="1">
    <location>
        <position position="646"/>
    </location>
    <ligand>
        <name>Ca(2+)</name>
        <dbReference type="ChEBI" id="CHEBI:29108"/>
    </ligand>
</feature>
<feature type="binding site" evidence="1">
    <location>
        <position position="649"/>
    </location>
    <ligand>
        <name>Ca(2+)</name>
        <dbReference type="ChEBI" id="CHEBI:29108"/>
    </ligand>
</feature>
<protein>
    <recommendedName>
        <fullName>Lipase 1</fullName>
        <ecNumber>3.1.1.3</ecNumber>
    </recommendedName>
    <alternativeName>
        <fullName>Glycerol ester hydrolase 1</fullName>
    </alternativeName>
</protein>
<organism>
    <name type="scientific">Staphylococcus aureus (strain MW2)</name>
    <dbReference type="NCBI Taxonomy" id="196620"/>
    <lineage>
        <taxon>Bacteria</taxon>
        <taxon>Bacillati</taxon>
        <taxon>Bacillota</taxon>
        <taxon>Bacilli</taxon>
        <taxon>Bacillales</taxon>
        <taxon>Staphylococcaceae</taxon>
        <taxon>Staphylococcus</taxon>
    </lineage>
</organism>
<dbReference type="EC" id="3.1.1.3"/>
<dbReference type="EMBL" id="BA000033">
    <property type="protein sequence ID" value="BAB96455.1"/>
    <property type="status" value="ALT_INIT"/>
    <property type="molecule type" value="Genomic_DNA"/>
</dbReference>
<dbReference type="RefSeq" id="WP_000842036.1">
    <property type="nucleotide sequence ID" value="NC_003923.1"/>
</dbReference>
<dbReference type="SMR" id="Q8NUI5"/>
<dbReference type="ESTHER" id="staau-LIP">
    <property type="family name" value="Bacterial_lip_FamI.6"/>
</dbReference>
<dbReference type="KEGG" id="sam:MW2590"/>
<dbReference type="HOGENOM" id="CLU_023555_2_1_9"/>
<dbReference type="GO" id="GO:0005576">
    <property type="term" value="C:extracellular region"/>
    <property type="evidence" value="ECO:0007669"/>
    <property type="project" value="UniProtKB-SubCell"/>
</dbReference>
<dbReference type="GO" id="GO:0046872">
    <property type="term" value="F:metal ion binding"/>
    <property type="evidence" value="ECO:0007669"/>
    <property type="project" value="UniProtKB-KW"/>
</dbReference>
<dbReference type="GO" id="GO:0004806">
    <property type="term" value="F:triacylglycerol lipase activity"/>
    <property type="evidence" value="ECO:0007669"/>
    <property type="project" value="UniProtKB-EC"/>
</dbReference>
<dbReference type="GO" id="GO:0016042">
    <property type="term" value="P:lipid catabolic process"/>
    <property type="evidence" value="ECO:0007669"/>
    <property type="project" value="UniProtKB-KW"/>
</dbReference>
<dbReference type="Gene3D" id="3.40.50.1820">
    <property type="entry name" value="alpha/beta hydrolase"/>
    <property type="match status" value="1"/>
</dbReference>
<dbReference type="InterPro" id="IPR029058">
    <property type="entry name" value="AB_hydrolase_fold"/>
</dbReference>
<dbReference type="InterPro" id="IPR056304">
    <property type="entry name" value="Lip-like_C"/>
</dbReference>
<dbReference type="InterPro" id="IPR005877">
    <property type="entry name" value="YSIRK_signal_dom"/>
</dbReference>
<dbReference type="NCBIfam" id="NF047351">
    <property type="entry name" value="lipase_YSIRK_Sa"/>
    <property type="match status" value="1"/>
</dbReference>
<dbReference type="NCBIfam" id="TIGR01168">
    <property type="entry name" value="YSIRK_signal"/>
    <property type="match status" value="1"/>
</dbReference>
<dbReference type="PANTHER" id="PTHR34043">
    <property type="entry name" value="ALPHA/BETA-HYDROLASES SUPERFAMILY PROTEIN"/>
    <property type="match status" value="1"/>
</dbReference>
<dbReference type="PANTHER" id="PTHR34043:SF3">
    <property type="entry name" value="ALPHA_BETA-HYDROLASES SUPERFAMILY PROTEIN"/>
    <property type="match status" value="1"/>
</dbReference>
<dbReference type="Pfam" id="PF24708">
    <property type="entry name" value="Lip_C"/>
    <property type="match status" value="1"/>
</dbReference>
<dbReference type="Pfam" id="PF04650">
    <property type="entry name" value="YSIRK_signal"/>
    <property type="match status" value="1"/>
</dbReference>
<dbReference type="SUPFAM" id="SSF53474">
    <property type="entry name" value="alpha/beta-Hydrolases"/>
    <property type="match status" value="1"/>
</dbReference>
<dbReference type="PROSITE" id="PS00120">
    <property type="entry name" value="LIPASE_SER"/>
    <property type="match status" value="1"/>
</dbReference>
<gene>
    <name type="primary">lip1</name>
    <name type="ordered locus">MW2590</name>
</gene>
<name>LIP1_STAAW</name>
<comment type="catalytic activity">
    <reaction>
        <text>a triacylglycerol + H2O = a diacylglycerol + a fatty acid + H(+)</text>
        <dbReference type="Rhea" id="RHEA:12044"/>
        <dbReference type="ChEBI" id="CHEBI:15377"/>
        <dbReference type="ChEBI" id="CHEBI:15378"/>
        <dbReference type="ChEBI" id="CHEBI:17855"/>
        <dbReference type="ChEBI" id="CHEBI:18035"/>
        <dbReference type="ChEBI" id="CHEBI:28868"/>
        <dbReference type="EC" id="3.1.1.3"/>
    </reaction>
</comment>
<comment type="subcellular location">
    <subcellularLocation>
        <location evidence="1">Secreted</location>
    </subcellularLocation>
</comment>
<comment type="similarity">
    <text evidence="5">Belongs to the AB hydrolase superfamily. Lipase family.</text>
</comment>
<comment type="sequence caution" evidence="5">
    <conflict type="erroneous initiation">
        <sequence resource="EMBL-CDS" id="BAB96455"/>
    </conflict>
    <text>Extended N-terminus.</text>
</comment>
<accession>Q8NUI5</accession>
<sequence>MKSQNKYSIRKFSVGASSILIATLLFLSGGQAQAAEKQVNMGNSQEDTVTAQSIGDQQTRENANYQRENGVDEQQHTENLTKNLHNDKTISEENHRKTDDLNKDQLKDDKKSSLNNKNIQRDTTKNNNANPSDVNQGLEQAINDGKQSKVASQQQSKEADNSQDSNANNNLPSQSRIKEAPSLNKLDQTSQREIVNETEIEKVQPQQNNQANDKITNYNFNNEQEVKPQKDEKTLSVSDLKNNQKSPVEPTKDNDKKNGLNLLKSSAVATLPNKGTKELTAKAKDDQTNKVAKQGQYKNQDPIVLVHGFNGFTDDINPSVLAHYWGGNKMNIRQDLEENGYKAYEASISAFGSNYDRAVELYYYIKGGRVDYGAAHAAKYGHERYGKTYEGIYKDWKPGQKVHLVGHSMGGQTIRQLEELLRNGNREEIEYQKKHGGEISPLFKGNHDNMISSITTLGTPHNGTHASDLAGNEALVRQIVFDIGKMFGNKNSRVDFGLAQWGLKQKPNESYIDYVKRVKQSNLWKSKDNGFYDLTREGATDLNRKTSLNPNIVYKTYTGEATHKALNSDRQKADLNMFFPFVITGNLIGKATEKEWRENDGLVSVISSQHPFNQAYTKATDKIQKGIWQVTPTKHDWDHVDFVGQDSSDTVRTREELQDFWHHLADDLVKTEKLTDTKQA</sequence>